<dbReference type="EMBL" id="GU299518">
    <property type="protein sequence ID" value="ADB65793.1"/>
    <property type="molecule type" value="mRNA"/>
</dbReference>
<dbReference type="ConoServer" id="3993">
    <property type="toxin name" value="Cal9.2d precursor"/>
</dbReference>
<dbReference type="GO" id="GO:0005576">
    <property type="term" value="C:extracellular region"/>
    <property type="evidence" value="ECO:0007669"/>
    <property type="project" value="UniProtKB-SubCell"/>
</dbReference>
<dbReference type="GO" id="GO:0099106">
    <property type="term" value="F:ion channel regulator activity"/>
    <property type="evidence" value="ECO:0007669"/>
    <property type="project" value="UniProtKB-KW"/>
</dbReference>
<dbReference type="GO" id="GO:0090729">
    <property type="term" value="F:toxin activity"/>
    <property type="evidence" value="ECO:0007669"/>
    <property type="project" value="UniProtKB-KW"/>
</dbReference>
<comment type="function">
    <text evidence="3">Probable neurotoxin with unknown target. Possibly targets ion channels.</text>
</comment>
<comment type="subcellular location">
    <subcellularLocation>
        <location evidence="4">Secreted</location>
    </subcellularLocation>
</comment>
<comment type="tissue specificity">
    <text evidence="4">Expressed by the venom duct.</text>
</comment>
<comment type="domain">
    <text>The cysteine framework is IX (C-C-C-C-C-C).</text>
</comment>
<protein>
    <recommendedName>
        <fullName evidence="2">Conotoxin Cal9.2d</fullName>
    </recommendedName>
</protein>
<sequence length="52" mass="5726">KRGVTLREDDRFPCNAGNCACLPLDSYSYTCLSPTSSTANCESDECVSEDDW</sequence>
<proteinExistence type="evidence at transcript level"/>
<organism>
    <name type="scientific">Californiconus californicus</name>
    <name type="common">California cone</name>
    <name type="synonym">Conus californicus</name>
    <dbReference type="NCBI Taxonomy" id="1736779"/>
    <lineage>
        <taxon>Eukaryota</taxon>
        <taxon>Metazoa</taxon>
        <taxon>Spiralia</taxon>
        <taxon>Lophotrochozoa</taxon>
        <taxon>Mollusca</taxon>
        <taxon>Gastropoda</taxon>
        <taxon>Caenogastropoda</taxon>
        <taxon>Neogastropoda</taxon>
        <taxon>Conoidea</taxon>
        <taxon>Conidae</taxon>
        <taxon>Californiconus</taxon>
    </lineage>
</organism>
<keyword id="KW-1015">Disulfide bond</keyword>
<keyword id="KW-0872">Ion channel impairing toxin</keyword>
<keyword id="KW-0528">Neurotoxin</keyword>
<keyword id="KW-0964">Secreted</keyword>
<keyword id="KW-0800">Toxin</keyword>
<accession>D2Y3T6</accession>
<reference key="1">
    <citation type="journal article" date="2011" name="Toxicon">
        <title>Diversity of conotoxin types from Conus californicus reflects a diversity of prey types and a novel evolutionary history.</title>
        <authorList>
            <person name="Elliger C.A."/>
            <person name="Richmond T.A."/>
            <person name="Lebaric Z.N."/>
            <person name="Pierce N.T."/>
            <person name="Sweedler J.V."/>
            <person name="Gilly W.F."/>
        </authorList>
    </citation>
    <scope>NUCLEOTIDE SEQUENCE [MRNA]</scope>
    <source>
        <tissue>Venom duct</tissue>
    </source>
</reference>
<name>CU92D_CONCL</name>
<feature type="propeptide" id="PRO_0000414949" evidence="4">
    <location>
        <begin position="1" status="less than"/>
        <end position="6"/>
    </location>
</feature>
<feature type="peptide" id="PRO_5000570806" description="Conotoxin Cal9.2d" evidence="4">
    <location>
        <begin position="8"/>
        <end position="52"/>
    </location>
</feature>
<feature type="disulfide bond" evidence="1">
    <location>
        <begin position="14"/>
        <end position="31"/>
    </location>
</feature>
<feature type="disulfide bond" evidence="1">
    <location>
        <begin position="19"/>
        <end position="41"/>
    </location>
</feature>
<feature type="disulfide bond" evidence="1">
    <location>
        <begin position="21"/>
        <end position="46"/>
    </location>
</feature>
<feature type="non-terminal residue">
    <location>
        <position position="1"/>
    </location>
</feature>
<evidence type="ECO:0000250" key="1"/>
<evidence type="ECO:0000303" key="2">
    <source>
    </source>
</evidence>
<evidence type="ECO:0000305" key="3"/>
<evidence type="ECO:0000305" key="4">
    <source>
    </source>
</evidence>